<reference key="1">
    <citation type="journal article" date="2009" name="J. Bacteriol.">
        <title>The genome of Thermosipho africanus TCF52B: lateral genetic connections to the Firmicutes and Archaea.</title>
        <authorList>
            <person name="Nesboe C.L."/>
            <person name="Bapteste E."/>
            <person name="Curtis B."/>
            <person name="Dahle H."/>
            <person name="Lopez P."/>
            <person name="Macleod D."/>
            <person name="Dlutek M."/>
            <person name="Bowman S."/>
            <person name="Zhaxybayeva O."/>
            <person name="Birkeland N.-K."/>
            <person name="Doolittle W.F."/>
        </authorList>
    </citation>
    <scope>NUCLEOTIDE SEQUENCE [LARGE SCALE GENOMIC DNA]</scope>
    <source>
        <strain>TCF52B</strain>
    </source>
</reference>
<dbReference type="EMBL" id="CP001185">
    <property type="protein sequence ID" value="ACJ75674.1"/>
    <property type="molecule type" value="Genomic_DNA"/>
</dbReference>
<dbReference type="RefSeq" id="WP_004101465.1">
    <property type="nucleotide sequence ID" value="NC_011653.1"/>
</dbReference>
<dbReference type="SMR" id="B7IHW0"/>
<dbReference type="STRING" id="484019.THA_1229"/>
<dbReference type="KEGG" id="taf:THA_1229"/>
<dbReference type="eggNOG" id="COG0096">
    <property type="taxonomic scope" value="Bacteria"/>
</dbReference>
<dbReference type="HOGENOM" id="CLU_098428_0_2_0"/>
<dbReference type="OrthoDB" id="9802617at2"/>
<dbReference type="Proteomes" id="UP000002453">
    <property type="component" value="Chromosome"/>
</dbReference>
<dbReference type="GO" id="GO:1990904">
    <property type="term" value="C:ribonucleoprotein complex"/>
    <property type="evidence" value="ECO:0007669"/>
    <property type="project" value="UniProtKB-KW"/>
</dbReference>
<dbReference type="GO" id="GO:0005840">
    <property type="term" value="C:ribosome"/>
    <property type="evidence" value="ECO:0007669"/>
    <property type="project" value="UniProtKB-KW"/>
</dbReference>
<dbReference type="GO" id="GO:0019843">
    <property type="term" value="F:rRNA binding"/>
    <property type="evidence" value="ECO:0007669"/>
    <property type="project" value="UniProtKB-UniRule"/>
</dbReference>
<dbReference type="GO" id="GO:0003735">
    <property type="term" value="F:structural constituent of ribosome"/>
    <property type="evidence" value="ECO:0007669"/>
    <property type="project" value="InterPro"/>
</dbReference>
<dbReference type="GO" id="GO:0006412">
    <property type="term" value="P:translation"/>
    <property type="evidence" value="ECO:0007669"/>
    <property type="project" value="UniProtKB-UniRule"/>
</dbReference>
<dbReference type="FunFam" id="3.30.1370.30:FF:000002">
    <property type="entry name" value="30S ribosomal protein S8"/>
    <property type="match status" value="1"/>
</dbReference>
<dbReference type="FunFam" id="3.30.1490.10:FF:000001">
    <property type="entry name" value="30S ribosomal protein S8"/>
    <property type="match status" value="1"/>
</dbReference>
<dbReference type="Gene3D" id="3.30.1370.30">
    <property type="match status" value="1"/>
</dbReference>
<dbReference type="Gene3D" id="3.30.1490.10">
    <property type="match status" value="1"/>
</dbReference>
<dbReference type="HAMAP" id="MF_01302_B">
    <property type="entry name" value="Ribosomal_uS8_B"/>
    <property type="match status" value="1"/>
</dbReference>
<dbReference type="InterPro" id="IPR000630">
    <property type="entry name" value="Ribosomal_uS8"/>
</dbReference>
<dbReference type="InterPro" id="IPR047863">
    <property type="entry name" value="Ribosomal_uS8_CS"/>
</dbReference>
<dbReference type="InterPro" id="IPR035987">
    <property type="entry name" value="Ribosomal_uS8_sf"/>
</dbReference>
<dbReference type="NCBIfam" id="NF001109">
    <property type="entry name" value="PRK00136.1"/>
    <property type="match status" value="1"/>
</dbReference>
<dbReference type="PANTHER" id="PTHR11758">
    <property type="entry name" value="40S RIBOSOMAL PROTEIN S15A"/>
    <property type="match status" value="1"/>
</dbReference>
<dbReference type="Pfam" id="PF00410">
    <property type="entry name" value="Ribosomal_S8"/>
    <property type="match status" value="1"/>
</dbReference>
<dbReference type="SUPFAM" id="SSF56047">
    <property type="entry name" value="Ribosomal protein S8"/>
    <property type="match status" value="1"/>
</dbReference>
<dbReference type="PROSITE" id="PS00053">
    <property type="entry name" value="RIBOSOMAL_S8"/>
    <property type="match status" value="1"/>
</dbReference>
<feature type="chain" id="PRO_1000140625" description="Small ribosomal subunit protein uS8">
    <location>
        <begin position="1"/>
        <end position="134"/>
    </location>
</feature>
<accession>B7IHW0</accession>
<organism>
    <name type="scientific">Thermosipho africanus (strain TCF52B)</name>
    <dbReference type="NCBI Taxonomy" id="484019"/>
    <lineage>
        <taxon>Bacteria</taxon>
        <taxon>Thermotogati</taxon>
        <taxon>Thermotogota</taxon>
        <taxon>Thermotogae</taxon>
        <taxon>Thermotogales</taxon>
        <taxon>Fervidobacteriaceae</taxon>
        <taxon>Thermosipho</taxon>
    </lineage>
</organism>
<proteinExistence type="inferred from homology"/>
<sequence>MWSDPIADMLTRIRNANVALKEQVDVPASNLKKEIAEILKREGFIKDYTYIEDGKQGIIRIHMKYKGTRRNRERVIHGIVRVSKPGRRIYVGKDNLPKVKNGLGIAILTTSKGVLTDKQAREIGVGGEVIAYIW</sequence>
<keyword id="KW-1185">Reference proteome</keyword>
<keyword id="KW-0687">Ribonucleoprotein</keyword>
<keyword id="KW-0689">Ribosomal protein</keyword>
<keyword id="KW-0694">RNA-binding</keyword>
<keyword id="KW-0699">rRNA-binding</keyword>
<name>RS8_THEAB</name>
<evidence type="ECO:0000255" key="1">
    <source>
        <dbReference type="HAMAP-Rule" id="MF_01302"/>
    </source>
</evidence>
<evidence type="ECO:0000305" key="2"/>
<protein>
    <recommendedName>
        <fullName evidence="1">Small ribosomal subunit protein uS8</fullName>
    </recommendedName>
    <alternativeName>
        <fullName evidence="2">30S ribosomal protein S8</fullName>
    </alternativeName>
</protein>
<gene>
    <name evidence="1" type="primary">rpsH</name>
    <name type="ordered locus">THA_1229</name>
</gene>
<comment type="function">
    <text evidence="1">One of the primary rRNA binding proteins, it binds directly to 16S rRNA central domain where it helps coordinate assembly of the platform of the 30S subunit.</text>
</comment>
<comment type="subunit">
    <text evidence="1">Part of the 30S ribosomal subunit. Contacts proteins S5 and S12.</text>
</comment>
<comment type="similarity">
    <text evidence="1">Belongs to the universal ribosomal protein uS8 family.</text>
</comment>